<accession>Q57J26</accession>
<sequence length="704" mass="77599">MARTTPIARYRNIGISAHIDAGKTTTTERILFYTGVNHKIGEVHDGAATMDWMEQEQERGITITSAATTAFWSGMAKQYEPHRINIIDTPGHVDFTIEVERSMRVLDGAVMVYCAVGGVQPQSETVWRQANKYKVPRIAFVNKMDRMGANFLKVVGQIKTRLGANPVPLQLAIGAEEGFTGVVDLVKMKAINWNDADQGVTFEYEDIPADMQDLANEWHQNLIESAAEASEELMEKYLGGEELTEEEIKQALRQRVLNNEIILVTCGSAFKNKGVQAMLDAVIDYLPSPVDVPAINGILDDGKDTPAERHASDDEPFSALAFKIATDPFVGNLTFFRVYSGVVNSGDTVLNSVKTARERFGRIVQMHANKREEIKEVRAGDIAAAIGLKDVTTGDTLCDPENPIILERMEFPEPVISIAVEPKTKADQEKMGLALGRLAKEDPSFRVWTDEESNQTIIAGMGELHLDIIVDRMKREFNVEANVGKPQVAYREAIRAKVTDIEGKHAKQSGGRGQYGHVVIDMYPLEPGSNPKGYEFINDIKGGVIPGEYIPAVDKGIQEQLKSGPLAGYPVVDLGVRLHFGSYHDVDSSELAFKLAASIAFKEGFKKAKPVLLEPIMKVEVETPEENTGDVIGDLSRRRGMLKGQESEVTGVKIHAEVPLSEMFGYATQLRSLTKGRASYTMEFLKYDDAPNNVAQAVIEARGK</sequence>
<feature type="chain" id="PRO_0000225237" description="Elongation factor G">
    <location>
        <begin position="1"/>
        <end position="704"/>
    </location>
</feature>
<feature type="domain" description="tr-type G">
    <location>
        <begin position="8"/>
        <end position="290"/>
    </location>
</feature>
<feature type="binding site" evidence="1">
    <location>
        <begin position="17"/>
        <end position="24"/>
    </location>
    <ligand>
        <name>GTP</name>
        <dbReference type="ChEBI" id="CHEBI:37565"/>
    </ligand>
</feature>
<feature type="binding site" evidence="1">
    <location>
        <begin position="88"/>
        <end position="92"/>
    </location>
    <ligand>
        <name>GTP</name>
        <dbReference type="ChEBI" id="CHEBI:37565"/>
    </ligand>
</feature>
<feature type="binding site" evidence="1">
    <location>
        <begin position="142"/>
        <end position="145"/>
    </location>
    <ligand>
        <name>GTP</name>
        <dbReference type="ChEBI" id="CHEBI:37565"/>
    </ligand>
</feature>
<proteinExistence type="inferred from homology"/>
<dbReference type="EMBL" id="AE017220">
    <property type="protein sequence ID" value="AAX67286.1"/>
    <property type="molecule type" value="Genomic_DNA"/>
</dbReference>
<dbReference type="RefSeq" id="WP_000124693.1">
    <property type="nucleotide sequence ID" value="NC_006905.1"/>
</dbReference>
<dbReference type="SMR" id="Q57J26"/>
<dbReference type="KEGG" id="sec:SCH_3380"/>
<dbReference type="HOGENOM" id="CLU_002794_4_1_6"/>
<dbReference type="Proteomes" id="UP000000538">
    <property type="component" value="Chromosome"/>
</dbReference>
<dbReference type="GO" id="GO:0005737">
    <property type="term" value="C:cytoplasm"/>
    <property type="evidence" value="ECO:0007669"/>
    <property type="project" value="UniProtKB-SubCell"/>
</dbReference>
<dbReference type="GO" id="GO:0005525">
    <property type="term" value="F:GTP binding"/>
    <property type="evidence" value="ECO:0007669"/>
    <property type="project" value="UniProtKB-UniRule"/>
</dbReference>
<dbReference type="GO" id="GO:0003924">
    <property type="term" value="F:GTPase activity"/>
    <property type="evidence" value="ECO:0007669"/>
    <property type="project" value="InterPro"/>
</dbReference>
<dbReference type="GO" id="GO:0097216">
    <property type="term" value="F:guanosine tetraphosphate binding"/>
    <property type="evidence" value="ECO:0007669"/>
    <property type="project" value="UniProtKB-ARBA"/>
</dbReference>
<dbReference type="GO" id="GO:0003746">
    <property type="term" value="F:translation elongation factor activity"/>
    <property type="evidence" value="ECO:0007669"/>
    <property type="project" value="UniProtKB-UniRule"/>
</dbReference>
<dbReference type="GO" id="GO:0032790">
    <property type="term" value="P:ribosome disassembly"/>
    <property type="evidence" value="ECO:0007669"/>
    <property type="project" value="TreeGrafter"/>
</dbReference>
<dbReference type="CDD" id="cd01886">
    <property type="entry name" value="EF-G"/>
    <property type="match status" value="1"/>
</dbReference>
<dbReference type="CDD" id="cd16262">
    <property type="entry name" value="EFG_III"/>
    <property type="match status" value="1"/>
</dbReference>
<dbReference type="CDD" id="cd01434">
    <property type="entry name" value="EFG_mtEFG1_IV"/>
    <property type="match status" value="1"/>
</dbReference>
<dbReference type="CDD" id="cd03713">
    <property type="entry name" value="EFG_mtEFG_C"/>
    <property type="match status" value="1"/>
</dbReference>
<dbReference type="CDD" id="cd04088">
    <property type="entry name" value="EFG_mtEFG_II"/>
    <property type="match status" value="1"/>
</dbReference>
<dbReference type="FunFam" id="2.40.30.10:FF:000006">
    <property type="entry name" value="Elongation factor G"/>
    <property type="match status" value="1"/>
</dbReference>
<dbReference type="FunFam" id="3.30.230.10:FF:000003">
    <property type="entry name" value="Elongation factor G"/>
    <property type="match status" value="1"/>
</dbReference>
<dbReference type="FunFam" id="3.30.70.240:FF:000001">
    <property type="entry name" value="Elongation factor G"/>
    <property type="match status" value="1"/>
</dbReference>
<dbReference type="FunFam" id="3.30.70.870:FF:000001">
    <property type="entry name" value="Elongation factor G"/>
    <property type="match status" value="1"/>
</dbReference>
<dbReference type="FunFam" id="3.40.50.300:FF:000029">
    <property type="entry name" value="Elongation factor G"/>
    <property type="match status" value="1"/>
</dbReference>
<dbReference type="Gene3D" id="3.30.230.10">
    <property type="match status" value="1"/>
</dbReference>
<dbReference type="Gene3D" id="3.30.70.240">
    <property type="match status" value="1"/>
</dbReference>
<dbReference type="Gene3D" id="3.30.70.870">
    <property type="entry name" value="Elongation Factor G (Translational Gtpase), domain 3"/>
    <property type="match status" value="1"/>
</dbReference>
<dbReference type="Gene3D" id="3.40.50.300">
    <property type="entry name" value="P-loop containing nucleotide triphosphate hydrolases"/>
    <property type="match status" value="1"/>
</dbReference>
<dbReference type="Gene3D" id="2.40.30.10">
    <property type="entry name" value="Translation factors"/>
    <property type="match status" value="1"/>
</dbReference>
<dbReference type="HAMAP" id="MF_00054_B">
    <property type="entry name" value="EF_G_EF_2_B"/>
    <property type="match status" value="1"/>
</dbReference>
<dbReference type="InterPro" id="IPR041095">
    <property type="entry name" value="EFG_II"/>
</dbReference>
<dbReference type="InterPro" id="IPR009022">
    <property type="entry name" value="EFG_III"/>
</dbReference>
<dbReference type="InterPro" id="IPR035647">
    <property type="entry name" value="EFG_III/V"/>
</dbReference>
<dbReference type="InterPro" id="IPR047872">
    <property type="entry name" value="EFG_IV"/>
</dbReference>
<dbReference type="InterPro" id="IPR035649">
    <property type="entry name" value="EFG_V"/>
</dbReference>
<dbReference type="InterPro" id="IPR000640">
    <property type="entry name" value="EFG_V-like"/>
</dbReference>
<dbReference type="InterPro" id="IPR004161">
    <property type="entry name" value="EFTu-like_2"/>
</dbReference>
<dbReference type="InterPro" id="IPR031157">
    <property type="entry name" value="G_TR_CS"/>
</dbReference>
<dbReference type="InterPro" id="IPR027417">
    <property type="entry name" value="P-loop_NTPase"/>
</dbReference>
<dbReference type="InterPro" id="IPR020568">
    <property type="entry name" value="Ribosomal_Su5_D2-typ_SF"/>
</dbReference>
<dbReference type="InterPro" id="IPR014721">
    <property type="entry name" value="Ribsml_uS5_D2-typ_fold_subgr"/>
</dbReference>
<dbReference type="InterPro" id="IPR005225">
    <property type="entry name" value="Small_GTP-bd"/>
</dbReference>
<dbReference type="InterPro" id="IPR000795">
    <property type="entry name" value="T_Tr_GTP-bd_dom"/>
</dbReference>
<dbReference type="InterPro" id="IPR009000">
    <property type="entry name" value="Transl_B-barrel_sf"/>
</dbReference>
<dbReference type="InterPro" id="IPR004540">
    <property type="entry name" value="Transl_elong_EFG/EF2"/>
</dbReference>
<dbReference type="InterPro" id="IPR005517">
    <property type="entry name" value="Transl_elong_EFG/EF2_IV"/>
</dbReference>
<dbReference type="NCBIfam" id="TIGR00484">
    <property type="entry name" value="EF-G"/>
    <property type="match status" value="1"/>
</dbReference>
<dbReference type="NCBIfam" id="NF009381">
    <property type="entry name" value="PRK12740.1-5"/>
    <property type="match status" value="1"/>
</dbReference>
<dbReference type="NCBIfam" id="TIGR00231">
    <property type="entry name" value="small_GTP"/>
    <property type="match status" value="1"/>
</dbReference>
<dbReference type="PANTHER" id="PTHR43261:SF1">
    <property type="entry name" value="RIBOSOME-RELEASING FACTOR 2, MITOCHONDRIAL"/>
    <property type="match status" value="1"/>
</dbReference>
<dbReference type="PANTHER" id="PTHR43261">
    <property type="entry name" value="TRANSLATION ELONGATION FACTOR G-RELATED"/>
    <property type="match status" value="1"/>
</dbReference>
<dbReference type="Pfam" id="PF00679">
    <property type="entry name" value="EFG_C"/>
    <property type="match status" value="1"/>
</dbReference>
<dbReference type="Pfam" id="PF14492">
    <property type="entry name" value="EFG_III"/>
    <property type="match status" value="1"/>
</dbReference>
<dbReference type="Pfam" id="PF03764">
    <property type="entry name" value="EFG_IV"/>
    <property type="match status" value="1"/>
</dbReference>
<dbReference type="Pfam" id="PF00009">
    <property type="entry name" value="GTP_EFTU"/>
    <property type="match status" value="1"/>
</dbReference>
<dbReference type="Pfam" id="PF03144">
    <property type="entry name" value="GTP_EFTU_D2"/>
    <property type="match status" value="1"/>
</dbReference>
<dbReference type="PRINTS" id="PR00315">
    <property type="entry name" value="ELONGATNFCT"/>
</dbReference>
<dbReference type="SMART" id="SM00838">
    <property type="entry name" value="EFG_C"/>
    <property type="match status" value="1"/>
</dbReference>
<dbReference type="SMART" id="SM00889">
    <property type="entry name" value="EFG_IV"/>
    <property type="match status" value="1"/>
</dbReference>
<dbReference type="SUPFAM" id="SSF54980">
    <property type="entry name" value="EF-G C-terminal domain-like"/>
    <property type="match status" value="2"/>
</dbReference>
<dbReference type="SUPFAM" id="SSF52540">
    <property type="entry name" value="P-loop containing nucleoside triphosphate hydrolases"/>
    <property type="match status" value="1"/>
</dbReference>
<dbReference type="SUPFAM" id="SSF54211">
    <property type="entry name" value="Ribosomal protein S5 domain 2-like"/>
    <property type="match status" value="1"/>
</dbReference>
<dbReference type="SUPFAM" id="SSF50447">
    <property type="entry name" value="Translation proteins"/>
    <property type="match status" value="1"/>
</dbReference>
<dbReference type="PROSITE" id="PS00301">
    <property type="entry name" value="G_TR_1"/>
    <property type="match status" value="1"/>
</dbReference>
<dbReference type="PROSITE" id="PS51722">
    <property type="entry name" value="G_TR_2"/>
    <property type="match status" value="1"/>
</dbReference>
<organism>
    <name type="scientific">Salmonella choleraesuis (strain SC-B67)</name>
    <dbReference type="NCBI Taxonomy" id="321314"/>
    <lineage>
        <taxon>Bacteria</taxon>
        <taxon>Pseudomonadati</taxon>
        <taxon>Pseudomonadota</taxon>
        <taxon>Gammaproteobacteria</taxon>
        <taxon>Enterobacterales</taxon>
        <taxon>Enterobacteriaceae</taxon>
        <taxon>Salmonella</taxon>
    </lineage>
</organism>
<comment type="function">
    <text evidence="1">Catalyzes the GTP-dependent ribosomal translocation step during translation elongation. During this step, the ribosome changes from the pre-translocational (PRE) to the post-translocational (POST) state as the newly formed A-site-bound peptidyl-tRNA and P-site-bound deacylated tRNA move to the P and E sites, respectively. Catalyzes the coordinated movement of the two tRNA molecules, the mRNA and conformational changes in the ribosome.</text>
</comment>
<comment type="subcellular location">
    <subcellularLocation>
        <location evidence="1">Cytoplasm</location>
    </subcellularLocation>
</comment>
<comment type="similarity">
    <text evidence="1">Belongs to the TRAFAC class translation factor GTPase superfamily. Classic translation factor GTPase family. EF-G/EF-2 subfamily.</text>
</comment>
<evidence type="ECO:0000255" key="1">
    <source>
        <dbReference type="HAMAP-Rule" id="MF_00054"/>
    </source>
</evidence>
<gene>
    <name evidence="1" type="primary">fusA</name>
    <name type="ordered locus">SCH_3380</name>
</gene>
<keyword id="KW-0963">Cytoplasm</keyword>
<keyword id="KW-0251">Elongation factor</keyword>
<keyword id="KW-0342">GTP-binding</keyword>
<keyword id="KW-0547">Nucleotide-binding</keyword>
<keyword id="KW-0648">Protein biosynthesis</keyword>
<protein>
    <recommendedName>
        <fullName evidence="1">Elongation factor G</fullName>
        <shortName evidence="1">EF-G</shortName>
    </recommendedName>
</protein>
<name>EFG_SALCH</name>
<reference key="1">
    <citation type="journal article" date="2005" name="Nucleic Acids Res.">
        <title>The genome sequence of Salmonella enterica serovar Choleraesuis, a highly invasive and resistant zoonotic pathogen.</title>
        <authorList>
            <person name="Chiu C.-H."/>
            <person name="Tang P."/>
            <person name="Chu C."/>
            <person name="Hu S."/>
            <person name="Bao Q."/>
            <person name="Yu J."/>
            <person name="Chou Y.-Y."/>
            <person name="Wang H.-S."/>
            <person name="Lee Y.-S."/>
        </authorList>
    </citation>
    <scope>NUCLEOTIDE SEQUENCE [LARGE SCALE GENOMIC DNA]</scope>
    <source>
        <strain>SC-B67</strain>
    </source>
</reference>